<name>ARGB_ALLAM</name>
<keyword id="KW-0028">Amino-acid biosynthesis</keyword>
<keyword id="KW-0055">Arginine biosynthesis</keyword>
<keyword id="KW-0067">ATP-binding</keyword>
<keyword id="KW-0963">Cytoplasm</keyword>
<keyword id="KW-0418">Kinase</keyword>
<keyword id="KW-0547">Nucleotide-binding</keyword>
<keyword id="KW-1185">Reference proteome</keyword>
<keyword id="KW-0808">Transferase</keyword>
<sequence length="295" mass="31172">MSASESQTQARLLAQALPFMQRYENKTIVVKYGGHAMGDAELGRAFAADIALLKQSGVNPIVVHGGGPQIGAMLTKMGIESKFEGGLRVTDQKTVEIVEMVLAGSINKEIVALINQTGEWAIGLCGKDGNMVFAEKAKKTVIDPDSHIERVLDLGFVGEVVEVDRTLLDLLAKSEMIPVIAPVAPGRDGHTYNINADTFAGAIAGALRADRLLFLTDVPGVLDKNGELFKELSVAQARALIKDGTISGGMIPKVETCIDAINAGVHGVVILNGKTAHSVLLEIFTEHGAGTLIVP</sequence>
<comment type="function">
    <text evidence="1">Catalyzes the ATP-dependent phosphorylation of N-acetyl-L-glutamate.</text>
</comment>
<comment type="catalytic activity">
    <reaction evidence="1">
        <text>N-acetyl-L-glutamate + ATP = N-acetyl-L-glutamyl 5-phosphate + ADP</text>
        <dbReference type="Rhea" id="RHEA:14629"/>
        <dbReference type="ChEBI" id="CHEBI:30616"/>
        <dbReference type="ChEBI" id="CHEBI:44337"/>
        <dbReference type="ChEBI" id="CHEBI:57936"/>
        <dbReference type="ChEBI" id="CHEBI:456216"/>
        <dbReference type="EC" id="2.7.2.8"/>
    </reaction>
</comment>
<comment type="pathway">
    <text evidence="1">Amino-acid biosynthesis; L-arginine biosynthesis; N(2)-acetyl-L-ornithine from L-glutamate: step 2/4.</text>
</comment>
<comment type="subcellular location">
    <subcellularLocation>
        <location evidence="1">Cytoplasm</location>
    </subcellularLocation>
</comment>
<comment type="similarity">
    <text evidence="1">Belongs to the acetylglutamate kinase family. ArgB subfamily.</text>
</comment>
<gene>
    <name evidence="1" type="primary">argB</name>
    <name type="ordered locus">Avi_0464</name>
</gene>
<protein>
    <recommendedName>
        <fullName evidence="1">Acetylglutamate kinase</fullName>
        <ecNumber evidence="1">2.7.2.8</ecNumber>
    </recommendedName>
    <alternativeName>
        <fullName evidence="1">N-acetyl-L-glutamate 5-phosphotransferase</fullName>
    </alternativeName>
    <alternativeName>
        <fullName evidence="1">NAG kinase</fullName>
        <shortName evidence="1">NAGK</shortName>
    </alternativeName>
</protein>
<reference key="1">
    <citation type="journal article" date="2009" name="J. Bacteriol.">
        <title>Genome sequences of three Agrobacterium biovars help elucidate the evolution of multichromosome genomes in bacteria.</title>
        <authorList>
            <person name="Slater S.C."/>
            <person name="Goldman B.S."/>
            <person name="Goodner B."/>
            <person name="Setubal J.C."/>
            <person name="Farrand S.K."/>
            <person name="Nester E.W."/>
            <person name="Burr T.J."/>
            <person name="Banta L."/>
            <person name="Dickerman A.W."/>
            <person name="Paulsen I."/>
            <person name="Otten L."/>
            <person name="Suen G."/>
            <person name="Welch R."/>
            <person name="Almeida N.F."/>
            <person name="Arnold F."/>
            <person name="Burton O.T."/>
            <person name="Du Z."/>
            <person name="Ewing A."/>
            <person name="Godsy E."/>
            <person name="Heisel S."/>
            <person name="Houmiel K.L."/>
            <person name="Jhaveri J."/>
            <person name="Lu J."/>
            <person name="Miller N.M."/>
            <person name="Norton S."/>
            <person name="Chen Q."/>
            <person name="Phoolcharoen W."/>
            <person name="Ohlin V."/>
            <person name="Ondrusek D."/>
            <person name="Pride N."/>
            <person name="Stricklin S.L."/>
            <person name="Sun J."/>
            <person name="Wheeler C."/>
            <person name="Wilson L."/>
            <person name="Zhu H."/>
            <person name="Wood D.W."/>
        </authorList>
    </citation>
    <scope>NUCLEOTIDE SEQUENCE [LARGE SCALE GENOMIC DNA]</scope>
    <source>
        <strain>ATCC BAA-846 / DSM 112012 / S4</strain>
    </source>
</reference>
<dbReference type="EC" id="2.7.2.8" evidence="1"/>
<dbReference type="EMBL" id="CP000633">
    <property type="protein sequence ID" value="ACM35325.1"/>
    <property type="molecule type" value="Genomic_DNA"/>
</dbReference>
<dbReference type="RefSeq" id="WP_015914753.1">
    <property type="nucleotide sequence ID" value="NC_011989.1"/>
</dbReference>
<dbReference type="SMR" id="B9JZL3"/>
<dbReference type="STRING" id="311402.Avi_0464"/>
<dbReference type="GeneID" id="60681400"/>
<dbReference type="KEGG" id="avi:Avi_0464"/>
<dbReference type="eggNOG" id="COG0548">
    <property type="taxonomic scope" value="Bacteria"/>
</dbReference>
<dbReference type="HOGENOM" id="CLU_053680_0_0_5"/>
<dbReference type="UniPathway" id="UPA00068">
    <property type="reaction ID" value="UER00107"/>
</dbReference>
<dbReference type="Proteomes" id="UP000001596">
    <property type="component" value="Chromosome 1"/>
</dbReference>
<dbReference type="GO" id="GO:0005737">
    <property type="term" value="C:cytoplasm"/>
    <property type="evidence" value="ECO:0007669"/>
    <property type="project" value="UniProtKB-SubCell"/>
</dbReference>
<dbReference type="GO" id="GO:0003991">
    <property type="term" value="F:acetylglutamate kinase activity"/>
    <property type="evidence" value="ECO:0007669"/>
    <property type="project" value="UniProtKB-UniRule"/>
</dbReference>
<dbReference type="GO" id="GO:0005524">
    <property type="term" value="F:ATP binding"/>
    <property type="evidence" value="ECO:0007669"/>
    <property type="project" value="UniProtKB-UniRule"/>
</dbReference>
<dbReference type="GO" id="GO:0042450">
    <property type="term" value="P:arginine biosynthetic process via ornithine"/>
    <property type="evidence" value="ECO:0007669"/>
    <property type="project" value="UniProtKB-UniRule"/>
</dbReference>
<dbReference type="GO" id="GO:0006526">
    <property type="term" value="P:L-arginine biosynthetic process"/>
    <property type="evidence" value="ECO:0007669"/>
    <property type="project" value="UniProtKB-UniPathway"/>
</dbReference>
<dbReference type="CDD" id="cd04250">
    <property type="entry name" value="AAK_NAGK-C"/>
    <property type="match status" value="1"/>
</dbReference>
<dbReference type="FunFam" id="3.40.1160.10:FF:000004">
    <property type="entry name" value="Acetylglutamate kinase"/>
    <property type="match status" value="1"/>
</dbReference>
<dbReference type="Gene3D" id="3.40.1160.10">
    <property type="entry name" value="Acetylglutamate kinase-like"/>
    <property type="match status" value="1"/>
</dbReference>
<dbReference type="HAMAP" id="MF_00082">
    <property type="entry name" value="ArgB"/>
    <property type="match status" value="1"/>
</dbReference>
<dbReference type="InterPro" id="IPR036393">
    <property type="entry name" value="AceGlu_kinase-like_sf"/>
</dbReference>
<dbReference type="InterPro" id="IPR004662">
    <property type="entry name" value="AcgluKinase_fam"/>
</dbReference>
<dbReference type="InterPro" id="IPR037528">
    <property type="entry name" value="ArgB"/>
</dbReference>
<dbReference type="InterPro" id="IPR001048">
    <property type="entry name" value="Asp/Glu/Uridylate_kinase"/>
</dbReference>
<dbReference type="InterPro" id="IPR001057">
    <property type="entry name" value="Glu/AcGlu_kinase"/>
</dbReference>
<dbReference type="InterPro" id="IPR041727">
    <property type="entry name" value="NAGK-C"/>
</dbReference>
<dbReference type="NCBIfam" id="TIGR00761">
    <property type="entry name" value="argB"/>
    <property type="match status" value="1"/>
</dbReference>
<dbReference type="PANTHER" id="PTHR23342">
    <property type="entry name" value="N-ACETYLGLUTAMATE SYNTHASE"/>
    <property type="match status" value="1"/>
</dbReference>
<dbReference type="PANTHER" id="PTHR23342:SF0">
    <property type="entry name" value="N-ACETYLGLUTAMATE SYNTHASE, MITOCHONDRIAL"/>
    <property type="match status" value="1"/>
</dbReference>
<dbReference type="Pfam" id="PF00696">
    <property type="entry name" value="AA_kinase"/>
    <property type="match status" value="1"/>
</dbReference>
<dbReference type="PIRSF" id="PIRSF000728">
    <property type="entry name" value="NAGK"/>
    <property type="match status" value="1"/>
</dbReference>
<dbReference type="PRINTS" id="PR00474">
    <property type="entry name" value="GLU5KINASE"/>
</dbReference>
<dbReference type="SUPFAM" id="SSF53633">
    <property type="entry name" value="Carbamate kinase-like"/>
    <property type="match status" value="1"/>
</dbReference>
<accession>B9JZL3</accession>
<evidence type="ECO:0000255" key="1">
    <source>
        <dbReference type="HAMAP-Rule" id="MF_00082"/>
    </source>
</evidence>
<proteinExistence type="inferred from homology"/>
<feature type="chain" id="PRO_1000118328" description="Acetylglutamate kinase">
    <location>
        <begin position="1"/>
        <end position="295"/>
    </location>
</feature>
<feature type="binding site" evidence="1">
    <location>
        <begin position="66"/>
        <end position="67"/>
    </location>
    <ligand>
        <name>substrate</name>
    </ligand>
</feature>
<feature type="binding site" evidence="1">
    <location>
        <position position="88"/>
    </location>
    <ligand>
        <name>substrate</name>
    </ligand>
</feature>
<feature type="binding site" evidence="1">
    <location>
        <position position="193"/>
    </location>
    <ligand>
        <name>substrate</name>
    </ligand>
</feature>
<feature type="site" description="Transition state stabilizer" evidence="1">
    <location>
        <position position="31"/>
    </location>
</feature>
<feature type="site" description="Transition state stabilizer" evidence="1">
    <location>
        <position position="253"/>
    </location>
</feature>
<organism>
    <name type="scientific">Allorhizobium ampelinum (strain ATCC BAA-846 / DSM 112012 / S4)</name>
    <name type="common">Agrobacterium vitis (strain S4)</name>
    <dbReference type="NCBI Taxonomy" id="311402"/>
    <lineage>
        <taxon>Bacteria</taxon>
        <taxon>Pseudomonadati</taxon>
        <taxon>Pseudomonadota</taxon>
        <taxon>Alphaproteobacteria</taxon>
        <taxon>Hyphomicrobiales</taxon>
        <taxon>Rhizobiaceae</taxon>
        <taxon>Rhizobium/Agrobacterium group</taxon>
        <taxon>Allorhizobium</taxon>
        <taxon>Allorhizobium ampelinum</taxon>
    </lineage>
</organism>